<sequence length="77" mass="8599">MKLIIFTGLVLFAIVSLIEVQADNERACLPQYQVCTDAPGNCCSNLVCDCYGRYKSGARIGRNCFCLQKGVIYKREN</sequence>
<dbReference type="EMBL" id="EU926070">
    <property type="protein sequence ID" value="ACI41402.1"/>
    <property type="molecule type" value="mRNA"/>
</dbReference>
<dbReference type="EMBL" id="FM864074">
    <property type="protein sequence ID" value="CAS03671.1"/>
    <property type="molecule type" value="mRNA"/>
</dbReference>
<dbReference type="SMR" id="B6DCY6"/>
<dbReference type="ArachnoServer" id="AS001009">
    <property type="toxin name" value="U8-lycotoxin-Ls1f"/>
</dbReference>
<dbReference type="GO" id="GO:0005576">
    <property type="term" value="C:extracellular region"/>
    <property type="evidence" value="ECO:0007669"/>
    <property type="project" value="UniProtKB-SubCell"/>
</dbReference>
<dbReference type="GO" id="GO:0090729">
    <property type="term" value="F:toxin activity"/>
    <property type="evidence" value="ECO:0007669"/>
    <property type="project" value="UniProtKB-KW"/>
</dbReference>
<dbReference type="InterPro" id="IPR019553">
    <property type="entry name" value="Spider_toxin_CSTX_knottin"/>
</dbReference>
<dbReference type="Pfam" id="PF10530">
    <property type="entry name" value="Toxin_35"/>
    <property type="match status" value="1"/>
</dbReference>
<feature type="signal peptide" evidence="2">
    <location>
        <begin position="1"/>
        <end position="20"/>
    </location>
</feature>
<feature type="propeptide" id="PRO_0000401791" evidence="1">
    <location>
        <begin position="21"/>
        <end position="26"/>
    </location>
</feature>
<feature type="chain" id="PRO_0000401792" description="U8-lycotoxin-Ls1f">
    <location>
        <begin position="27"/>
        <end position="77"/>
    </location>
</feature>
<proteinExistence type="evidence at transcript level"/>
<protein>
    <recommendedName>
        <fullName>U8-lycotoxin-Ls1f</fullName>
    </recommendedName>
    <alternativeName>
        <fullName>Toxin-like structure LSTX-H15</fullName>
    </alternativeName>
</protein>
<reference key="1">
    <citation type="journal article" date="2010" name="Zoology">
        <title>Transcriptome analysis of the venom glands of the Chinese wolf spider Lycosa singoriensis.</title>
        <authorList>
            <person name="Zhang Y."/>
            <person name="Chen J."/>
            <person name="Tang X."/>
            <person name="Wang F."/>
            <person name="Jiang L."/>
            <person name="Xiong X."/>
            <person name="Wang M."/>
            <person name="Rong M."/>
            <person name="Liu Z."/>
            <person name="Liang S."/>
        </authorList>
    </citation>
    <scope>NUCLEOTIDE SEQUENCE [LARGE SCALE MRNA]</scope>
    <source>
        <tissue>Venom gland</tissue>
    </source>
</reference>
<comment type="subcellular location">
    <subcellularLocation>
        <location evidence="1">Secreted</location>
    </subcellularLocation>
</comment>
<comment type="tissue specificity">
    <text>Expressed by the venom gland.</text>
</comment>
<comment type="PTM">
    <text evidence="1">Contains 4 disulfide bonds.</text>
</comment>
<comment type="similarity">
    <text evidence="3">Belongs to the neurotoxin 19 (CSTX) family. 08 (U8-Lctx) subfamily.</text>
</comment>
<name>TX815_LYCSI</name>
<keyword id="KW-1015">Disulfide bond</keyword>
<keyword id="KW-0964">Secreted</keyword>
<keyword id="KW-0732">Signal</keyword>
<keyword id="KW-0800">Toxin</keyword>
<evidence type="ECO:0000250" key="1"/>
<evidence type="ECO:0000255" key="2"/>
<evidence type="ECO:0000305" key="3"/>
<organism>
    <name type="scientific">Lycosa singoriensis</name>
    <name type="common">Wolf spider</name>
    <name type="synonym">Aranea singoriensis</name>
    <dbReference type="NCBI Taxonomy" id="434756"/>
    <lineage>
        <taxon>Eukaryota</taxon>
        <taxon>Metazoa</taxon>
        <taxon>Ecdysozoa</taxon>
        <taxon>Arthropoda</taxon>
        <taxon>Chelicerata</taxon>
        <taxon>Arachnida</taxon>
        <taxon>Araneae</taxon>
        <taxon>Araneomorphae</taxon>
        <taxon>Entelegynae</taxon>
        <taxon>Lycosoidea</taxon>
        <taxon>Lycosidae</taxon>
        <taxon>Lycosa</taxon>
    </lineage>
</organism>
<accession>B6DCY6</accession>